<sequence>MATRLANTPQRETGTVIERKEQQLKPPAMYKVVLLNDDYTPMEFVVMILQQYFSRDRETATQIMLTVHREGKGVCGIYTRDIAATKVELVSTHARQAGHPLQCVMEEA</sequence>
<comment type="function">
    <text evidence="1">Involved in the modulation of the specificity of the ClpAP-mediated ATP-dependent protein degradation.</text>
</comment>
<comment type="subunit">
    <text evidence="1">Binds to the N-terminal domain of the chaperone ClpA.</text>
</comment>
<comment type="similarity">
    <text evidence="1">Belongs to the ClpS family.</text>
</comment>
<keyword id="KW-1185">Reference proteome</keyword>
<evidence type="ECO:0000255" key="1">
    <source>
        <dbReference type="HAMAP-Rule" id="MF_00302"/>
    </source>
</evidence>
<gene>
    <name evidence="1" type="primary">clpS</name>
    <name type="ordered locus">Rmet_2893</name>
</gene>
<organism>
    <name type="scientific">Cupriavidus metallidurans (strain ATCC 43123 / DSM 2839 / NBRC 102507 / CH34)</name>
    <name type="common">Ralstonia metallidurans</name>
    <dbReference type="NCBI Taxonomy" id="266264"/>
    <lineage>
        <taxon>Bacteria</taxon>
        <taxon>Pseudomonadati</taxon>
        <taxon>Pseudomonadota</taxon>
        <taxon>Betaproteobacteria</taxon>
        <taxon>Burkholderiales</taxon>
        <taxon>Burkholderiaceae</taxon>
        <taxon>Cupriavidus</taxon>
    </lineage>
</organism>
<protein>
    <recommendedName>
        <fullName evidence="1">ATP-dependent Clp protease adapter protein ClpS</fullName>
    </recommendedName>
</protein>
<accession>Q1LJB0</accession>
<name>CLPS_CUPMC</name>
<proteinExistence type="inferred from homology"/>
<reference key="1">
    <citation type="journal article" date="2010" name="PLoS ONE">
        <title>The complete genome sequence of Cupriavidus metallidurans strain CH34, a master survivalist in harsh and anthropogenic environments.</title>
        <authorList>
            <person name="Janssen P.J."/>
            <person name="Van Houdt R."/>
            <person name="Moors H."/>
            <person name="Monsieurs P."/>
            <person name="Morin N."/>
            <person name="Michaux A."/>
            <person name="Benotmane M.A."/>
            <person name="Leys N."/>
            <person name="Vallaeys T."/>
            <person name="Lapidus A."/>
            <person name="Monchy S."/>
            <person name="Medigue C."/>
            <person name="Taghavi S."/>
            <person name="McCorkle S."/>
            <person name="Dunn J."/>
            <person name="van der Lelie D."/>
            <person name="Mergeay M."/>
        </authorList>
    </citation>
    <scope>NUCLEOTIDE SEQUENCE [LARGE SCALE GENOMIC DNA]</scope>
    <source>
        <strain>ATCC 43123 / DSM 2839 / NBRC 102507 / CH34</strain>
    </source>
</reference>
<dbReference type="EMBL" id="CP000352">
    <property type="protein sequence ID" value="ABF09766.1"/>
    <property type="molecule type" value="Genomic_DNA"/>
</dbReference>
<dbReference type="RefSeq" id="WP_008644942.1">
    <property type="nucleotide sequence ID" value="NC_007973.1"/>
</dbReference>
<dbReference type="SMR" id="Q1LJB0"/>
<dbReference type="STRING" id="266264.Rmet_2893"/>
<dbReference type="GeneID" id="60820671"/>
<dbReference type="KEGG" id="rme:Rmet_2893"/>
<dbReference type="eggNOG" id="COG2127">
    <property type="taxonomic scope" value="Bacteria"/>
</dbReference>
<dbReference type="HOGENOM" id="CLU_134358_2_1_4"/>
<dbReference type="Proteomes" id="UP000002429">
    <property type="component" value="Chromosome"/>
</dbReference>
<dbReference type="GO" id="GO:0030163">
    <property type="term" value="P:protein catabolic process"/>
    <property type="evidence" value="ECO:0007669"/>
    <property type="project" value="InterPro"/>
</dbReference>
<dbReference type="GO" id="GO:0006508">
    <property type="term" value="P:proteolysis"/>
    <property type="evidence" value="ECO:0007669"/>
    <property type="project" value="UniProtKB-UniRule"/>
</dbReference>
<dbReference type="FunFam" id="3.30.1390.10:FF:000002">
    <property type="entry name" value="ATP-dependent Clp protease adapter protein ClpS"/>
    <property type="match status" value="1"/>
</dbReference>
<dbReference type="Gene3D" id="3.30.1390.10">
    <property type="match status" value="1"/>
</dbReference>
<dbReference type="HAMAP" id="MF_00302">
    <property type="entry name" value="ClpS"/>
    <property type="match status" value="1"/>
</dbReference>
<dbReference type="InterPro" id="IPR022935">
    <property type="entry name" value="ClpS"/>
</dbReference>
<dbReference type="InterPro" id="IPR003769">
    <property type="entry name" value="ClpS_core"/>
</dbReference>
<dbReference type="InterPro" id="IPR014719">
    <property type="entry name" value="Ribosomal_bL12_C/ClpS-like"/>
</dbReference>
<dbReference type="NCBIfam" id="NF000672">
    <property type="entry name" value="PRK00033.1-5"/>
    <property type="match status" value="1"/>
</dbReference>
<dbReference type="PANTHER" id="PTHR33473:SF19">
    <property type="entry name" value="ATP-DEPENDENT CLP PROTEASE ADAPTER PROTEIN CLPS"/>
    <property type="match status" value="1"/>
</dbReference>
<dbReference type="PANTHER" id="PTHR33473">
    <property type="entry name" value="ATP-DEPENDENT CLP PROTEASE ADAPTER PROTEIN CLPS1, CHLOROPLASTIC"/>
    <property type="match status" value="1"/>
</dbReference>
<dbReference type="Pfam" id="PF02617">
    <property type="entry name" value="ClpS"/>
    <property type="match status" value="1"/>
</dbReference>
<dbReference type="SUPFAM" id="SSF54736">
    <property type="entry name" value="ClpS-like"/>
    <property type="match status" value="1"/>
</dbReference>
<feature type="chain" id="PRO_0000300721" description="ATP-dependent Clp protease adapter protein ClpS">
    <location>
        <begin position="1"/>
        <end position="108"/>
    </location>
</feature>